<keyword id="KW-0963">Cytoplasm</keyword>
<keyword id="KW-0489">Methyltransferase</keyword>
<keyword id="KW-0698">rRNA processing</keyword>
<keyword id="KW-0949">S-adenosyl-L-methionine</keyword>
<keyword id="KW-0808">Transferase</keyword>
<name>RLMH_YERE8</name>
<sequence length="156" mass="17567">MKLQLVAVGTKMPDWVQTGFIDYLRRFPKDMPFDLVEIPAGKRGKNADIKRILEKEGELMLAAVGKNNRIVTLDIPGTLWETPQLAQQLERWKQDGRDVSLLIGGPEGLAQACKAAAEQSWSLSPLTLPHPLVRVLVAESLYRAWSITTNHPYHRE</sequence>
<protein>
    <recommendedName>
        <fullName evidence="1">Ribosomal RNA large subunit methyltransferase H</fullName>
        <ecNumber evidence="1">2.1.1.177</ecNumber>
    </recommendedName>
    <alternativeName>
        <fullName evidence="1">23S rRNA (pseudouridine1915-N3)-methyltransferase</fullName>
    </alternativeName>
    <alternativeName>
        <fullName evidence="1">23S rRNA m3Psi1915 methyltransferase</fullName>
    </alternativeName>
    <alternativeName>
        <fullName evidence="1">rRNA (pseudouridine-N3-)-methyltransferase RlmH</fullName>
    </alternativeName>
</protein>
<dbReference type="EC" id="2.1.1.177" evidence="1"/>
<dbReference type="EMBL" id="AM286415">
    <property type="protein sequence ID" value="CAL13040.1"/>
    <property type="molecule type" value="Genomic_DNA"/>
</dbReference>
<dbReference type="RefSeq" id="WP_011816838.1">
    <property type="nucleotide sequence ID" value="NC_008800.1"/>
</dbReference>
<dbReference type="RefSeq" id="YP_001007190.1">
    <property type="nucleotide sequence ID" value="NC_008800.1"/>
</dbReference>
<dbReference type="SMR" id="A1JPW6"/>
<dbReference type="KEGG" id="yen:YE3001"/>
<dbReference type="PATRIC" id="fig|393305.7.peg.3196"/>
<dbReference type="eggNOG" id="COG1576">
    <property type="taxonomic scope" value="Bacteria"/>
</dbReference>
<dbReference type="HOGENOM" id="CLU_100552_1_0_6"/>
<dbReference type="OrthoDB" id="9806643at2"/>
<dbReference type="Proteomes" id="UP000000642">
    <property type="component" value="Chromosome"/>
</dbReference>
<dbReference type="GO" id="GO:0005737">
    <property type="term" value="C:cytoplasm"/>
    <property type="evidence" value="ECO:0007669"/>
    <property type="project" value="UniProtKB-SubCell"/>
</dbReference>
<dbReference type="GO" id="GO:0070038">
    <property type="term" value="F:rRNA (pseudouridine-N3-)-methyltransferase activity"/>
    <property type="evidence" value="ECO:0007669"/>
    <property type="project" value="UniProtKB-UniRule"/>
</dbReference>
<dbReference type="CDD" id="cd18081">
    <property type="entry name" value="RlmH-like"/>
    <property type="match status" value="1"/>
</dbReference>
<dbReference type="FunFam" id="3.40.1280.10:FF:000004">
    <property type="entry name" value="Ribosomal RNA large subunit methyltransferase H"/>
    <property type="match status" value="1"/>
</dbReference>
<dbReference type="Gene3D" id="3.40.1280.10">
    <property type="match status" value="1"/>
</dbReference>
<dbReference type="HAMAP" id="MF_00658">
    <property type="entry name" value="23SrRNA_methyltr_H"/>
    <property type="match status" value="1"/>
</dbReference>
<dbReference type="InterPro" id="IPR029028">
    <property type="entry name" value="Alpha/beta_knot_MTases"/>
</dbReference>
<dbReference type="InterPro" id="IPR003742">
    <property type="entry name" value="RlmH-like"/>
</dbReference>
<dbReference type="InterPro" id="IPR029026">
    <property type="entry name" value="tRNA_m1G_MTases_N"/>
</dbReference>
<dbReference type="NCBIfam" id="NF000984">
    <property type="entry name" value="PRK00103.1-1"/>
    <property type="match status" value="1"/>
</dbReference>
<dbReference type="NCBIfam" id="NF000986">
    <property type="entry name" value="PRK00103.1-4"/>
    <property type="match status" value="1"/>
</dbReference>
<dbReference type="NCBIfam" id="TIGR00246">
    <property type="entry name" value="tRNA_RlmH_YbeA"/>
    <property type="match status" value="1"/>
</dbReference>
<dbReference type="PANTHER" id="PTHR33603">
    <property type="entry name" value="METHYLTRANSFERASE"/>
    <property type="match status" value="1"/>
</dbReference>
<dbReference type="PANTHER" id="PTHR33603:SF1">
    <property type="entry name" value="RIBOSOMAL RNA LARGE SUBUNIT METHYLTRANSFERASE H"/>
    <property type="match status" value="1"/>
</dbReference>
<dbReference type="Pfam" id="PF02590">
    <property type="entry name" value="SPOUT_MTase"/>
    <property type="match status" value="1"/>
</dbReference>
<dbReference type="PIRSF" id="PIRSF004505">
    <property type="entry name" value="MT_bac"/>
    <property type="match status" value="1"/>
</dbReference>
<dbReference type="SUPFAM" id="SSF75217">
    <property type="entry name" value="alpha/beta knot"/>
    <property type="match status" value="1"/>
</dbReference>
<evidence type="ECO:0000255" key="1">
    <source>
        <dbReference type="HAMAP-Rule" id="MF_00658"/>
    </source>
</evidence>
<gene>
    <name evidence="1" type="primary">rlmH</name>
    <name type="ordered locus">YE3001</name>
</gene>
<accession>A1JPW6</accession>
<comment type="function">
    <text evidence="1">Specifically methylates the pseudouridine at position 1915 (m3Psi1915) in 23S rRNA.</text>
</comment>
<comment type="catalytic activity">
    <reaction evidence="1">
        <text>pseudouridine(1915) in 23S rRNA + S-adenosyl-L-methionine = N(3)-methylpseudouridine(1915) in 23S rRNA + S-adenosyl-L-homocysteine + H(+)</text>
        <dbReference type="Rhea" id="RHEA:42752"/>
        <dbReference type="Rhea" id="RHEA-COMP:10221"/>
        <dbReference type="Rhea" id="RHEA-COMP:10222"/>
        <dbReference type="ChEBI" id="CHEBI:15378"/>
        <dbReference type="ChEBI" id="CHEBI:57856"/>
        <dbReference type="ChEBI" id="CHEBI:59789"/>
        <dbReference type="ChEBI" id="CHEBI:65314"/>
        <dbReference type="ChEBI" id="CHEBI:74486"/>
        <dbReference type="EC" id="2.1.1.177"/>
    </reaction>
</comment>
<comment type="subunit">
    <text evidence="1">Homodimer.</text>
</comment>
<comment type="subcellular location">
    <subcellularLocation>
        <location evidence="1">Cytoplasm</location>
    </subcellularLocation>
</comment>
<comment type="similarity">
    <text evidence="1">Belongs to the RNA methyltransferase RlmH family.</text>
</comment>
<organism>
    <name type="scientific">Yersinia enterocolitica serotype O:8 / biotype 1B (strain NCTC 13174 / 8081)</name>
    <dbReference type="NCBI Taxonomy" id="393305"/>
    <lineage>
        <taxon>Bacteria</taxon>
        <taxon>Pseudomonadati</taxon>
        <taxon>Pseudomonadota</taxon>
        <taxon>Gammaproteobacteria</taxon>
        <taxon>Enterobacterales</taxon>
        <taxon>Yersiniaceae</taxon>
        <taxon>Yersinia</taxon>
    </lineage>
</organism>
<feature type="chain" id="PRO_1000061856" description="Ribosomal RNA large subunit methyltransferase H">
    <location>
        <begin position="1"/>
        <end position="156"/>
    </location>
</feature>
<feature type="binding site" evidence="1">
    <location>
        <position position="73"/>
    </location>
    <ligand>
        <name>S-adenosyl-L-methionine</name>
        <dbReference type="ChEBI" id="CHEBI:59789"/>
    </ligand>
</feature>
<feature type="binding site" evidence="1">
    <location>
        <position position="104"/>
    </location>
    <ligand>
        <name>S-adenosyl-L-methionine</name>
        <dbReference type="ChEBI" id="CHEBI:59789"/>
    </ligand>
</feature>
<feature type="binding site" evidence="1">
    <location>
        <begin position="123"/>
        <end position="128"/>
    </location>
    <ligand>
        <name>S-adenosyl-L-methionine</name>
        <dbReference type="ChEBI" id="CHEBI:59789"/>
    </ligand>
</feature>
<proteinExistence type="inferred from homology"/>
<reference key="1">
    <citation type="journal article" date="2006" name="PLoS Genet.">
        <title>The complete genome sequence and comparative genome analysis of the high pathogenicity Yersinia enterocolitica strain 8081.</title>
        <authorList>
            <person name="Thomson N.R."/>
            <person name="Howard S."/>
            <person name="Wren B.W."/>
            <person name="Holden M.T.G."/>
            <person name="Crossman L."/>
            <person name="Challis G.L."/>
            <person name="Churcher C."/>
            <person name="Mungall K."/>
            <person name="Brooks K."/>
            <person name="Chillingworth T."/>
            <person name="Feltwell T."/>
            <person name="Abdellah Z."/>
            <person name="Hauser H."/>
            <person name="Jagels K."/>
            <person name="Maddison M."/>
            <person name="Moule S."/>
            <person name="Sanders M."/>
            <person name="Whitehead S."/>
            <person name="Quail M.A."/>
            <person name="Dougan G."/>
            <person name="Parkhill J."/>
            <person name="Prentice M.B."/>
        </authorList>
    </citation>
    <scope>NUCLEOTIDE SEQUENCE [LARGE SCALE GENOMIC DNA]</scope>
    <source>
        <strain>NCTC 13174 / 8081</strain>
    </source>
</reference>